<name>FOLD_HYDS0</name>
<protein>
    <recommendedName>
        <fullName evidence="1">Bifunctional protein FolD</fullName>
    </recommendedName>
    <domain>
        <recommendedName>
            <fullName evidence="1">Methylenetetrahydrofolate dehydrogenase</fullName>
            <ecNumber evidence="1">1.5.1.5</ecNumber>
        </recommendedName>
    </domain>
    <domain>
        <recommendedName>
            <fullName evidence="1">Methenyltetrahydrofolate cyclohydrolase</fullName>
            <ecNumber evidence="1">3.5.4.9</ecNumber>
        </recommendedName>
    </domain>
</protein>
<accession>B4U8W9</accession>
<keyword id="KW-0028">Amino-acid biosynthesis</keyword>
<keyword id="KW-0368">Histidine biosynthesis</keyword>
<keyword id="KW-0378">Hydrolase</keyword>
<keyword id="KW-0486">Methionine biosynthesis</keyword>
<keyword id="KW-0511">Multifunctional enzyme</keyword>
<keyword id="KW-0521">NADP</keyword>
<keyword id="KW-0554">One-carbon metabolism</keyword>
<keyword id="KW-0560">Oxidoreductase</keyword>
<keyword id="KW-0658">Purine biosynthesis</keyword>
<feature type="chain" id="PRO_1000185617" description="Bifunctional protein FolD">
    <location>
        <begin position="1"/>
        <end position="278"/>
    </location>
</feature>
<feature type="binding site" evidence="1">
    <location>
        <begin position="162"/>
        <end position="164"/>
    </location>
    <ligand>
        <name>NADP(+)</name>
        <dbReference type="ChEBI" id="CHEBI:58349"/>
    </ligand>
</feature>
<feature type="binding site" evidence="1">
    <location>
        <position position="228"/>
    </location>
    <ligand>
        <name>NADP(+)</name>
        <dbReference type="ChEBI" id="CHEBI:58349"/>
    </ligand>
</feature>
<proteinExistence type="inferred from homology"/>
<comment type="function">
    <text evidence="1">Catalyzes the oxidation of 5,10-methylenetetrahydrofolate to 5,10-methenyltetrahydrofolate and then the hydrolysis of 5,10-methenyltetrahydrofolate to 10-formyltetrahydrofolate.</text>
</comment>
<comment type="catalytic activity">
    <reaction evidence="1">
        <text>(6R)-5,10-methylene-5,6,7,8-tetrahydrofolate + NADP(+) = (6R)-5,10-methenyltetrahydrofolate + NADPH</text>
        <dbReference type="Rhea" id="RHEA:22812"/>
        <dbReference type="ChEBI" id="CHEBI:15636"/>
        <dbReference type="ChEBI" id="CHEBI:57455"/>
        <dbReference type="ChEBI" id="CHEBI:57783"/>
        <dbReference type="ChEBI" id="CHEBI:58349"/>
        <dbReference type="EC" id="1.5.1.5"/>
    </reaction>
</comment>
<comment type="catalytic activity">
    <reaction evidence="1">
        <text>(6R)-5,10-methenyltetrahydrofolate + H2O = (6R)-10-formyltetrahydrofolate + H(+)</text>
        <dbReference type="Rhea" id="RHEA:23700"/>
        <dbReference type="ChEBI" id="CHEBI:15377"/>
        <dbReference type="ChEBI" id="CHEBI:15378"/>
        <dbReference type="ChEBI" id="CHEBI:57455"/>
        <dbReference type="ChEBI" id="CHEBI:195366"/>
        <dbReference type="EC" id="3.5.4.9"/>
    </reaction>
</comment>
<comment type="pathway">
    <text evidence="1">One-carbon metabolism; tetrahydrofolate interconversion.</text>
</comment>
<comment type="subunit">
    <text evidence="1">Homodimer.</text>
</comment>
<comment type="similarity">
    <text evidence="1">Belongs to the tetrahydrofolate dehydrogenase/cyclohydrolase family.</text>
</comment>
<gene>
    <name evidence="1" type="primary">folD</name>
    <name type="ordered locus">HY04AAS1_0893</name>
</gene>
<evidence type="ECO:0000255" key="1">
    <source>
        <dbReference type="HAMAP-Rule" id="MF_01576"/>
    </source>
</evidence>
<dbReference type="EC" id="1.5.1.5" evidence="1"/>
<dbReference type="EC" id="3.5.4.9" evidence="1"/>
<dbReference type="EMBL" id="CP001130">
    <property type="protein sequence ID" value="ACG57580.1"/>
    <property type="molecule type" value="Genomic_DNA"/>
</dbReference>
<dbReference type="RefSeq" id="WP_012513936.1">
    <property type="nucleotide sequence ID" value="NC_011126.1"/>
</dbReference>
<dbReference type="SMR" id="B4U8W9"/>
<dbReference type="STRING" id="380749.HY04AAS1_0893"/>
<dbReference type="KEGG" id="hya:HY04AAS1_0893"/>
<dbReference type="eggNOG" id="COG0190">
    <property type="taxonomic scope" value="Bacteria"/>
</dbReference>
<dbReference type="HOGENOM" id="CLU_034045_2_1_0"/>
<dbReference type="OrthoDB" id="9803580at2"/>
<dbReference type="UniPathway" id="UPA00193"/>
<dbReference type="GO" id="GO:0005829">
    <property type="term" value="C:cytosol"/>
    <property type="evidence" value="ECO:0007669"/>
    <property type="project" value="TreeGrafter"/>
</dbReference>
<dbReference type="GO" id="GO:0004477">
    <property type="term" value="F:methenyltetrahydrofolate cyclohydrolase activity"/>
    <property type="evidence" value="ECO:0007669"/>
    <property type="project" value="UniProtKB-UniRule"/>
</dbReference>
<dbReference type="GO" id="GO:0004488">
    <property type="term" value="F:methylenetetrahydrofolate dehydrogenase (NADP+) activity"/>
    <property type="evidence" value="ECO:0007669"/>
    <property type="project" value="UniProtKB-UniRule"/>
</dbReference>
<dbReference type="GO" id="GO:0000105">
    <property type="term" value="P:L-histidine biosynthetic process"/>
    <property type="evidence" value="ECO:0007669"/>
    <property type="project" value="UniProtKB-KW"/>
</dbReference>
<dbReference type="GO" id="GO:0009086">
    <property type="term" value="P:methionine biosynthetic process"/>
    <property type="evidence" value="ECO:0007669"/>
    <property type="project" value="UniProtKB-KW"/>
</dbReference>
<dbReference type="GO" id="GO:0006164">
    <property type="term" value="P:purine nucleotide biosynthetic process"/>
    <property type="evidence" value="ECO:0007669"/>
    <property type="project" value="UniProtKB-KW"/>
</dbReference>
<dbReference type="GO" id="GO:0035999">
    <property type="term" value="P:tetrahydrofolate interconversion"/>
    <property type="evidence" value="ECO:0007669"/>
    <property type="project" value="UniProtKB-UniRule"/>
</dbReference>
<dbReference type="CDD" id="cd01080">
    <property type="entry name" value="NAD_bind_m-THF_DH_Cyclohyd"/>
    <property type="match status" value="1"/>
</dbReference>
<dbReference type="FunFam" id="3.40.50.720:FF:000094">
    <property type="entry name" value="Bifunctional protein FolD"/>
    <property type="match status" value="1"/>
</dbReference>
<dbReference type="FunFam" id="3.40.50.10860:FF:000005">
    <property type="entry name" value="C-1-tetrahydrofolate synthase, cytoplasmic, putative"/>
    <property type="match status" value="1"/>
</dbReference>
<dbReference type="Gene3D" id="3.40.50.10860">
    <property type="entry name" value="Leucine Dehydrogenase, chain A, domain 1"/>
    <property type="match status" value="1"/>
</dbReference>
<dbReference type="Gene3D" id="3.40.50.720">
    <property type="entry name" value="NAD(P)-binding Rossmann-like Domain"/>
    <property type="match status" value="1"/>
</dbReference>
<dbReference type="HAMAP" id="MF_01576">
    <property type="entry name" value="THF_DHG_CYH"/>
    <property type="match status" value="1"/>
</dbReference>
<dbReference type="InterPro" id="IPR046346">
    <property type="entry name" value="Aminoacid_DH-like_N_sf"/>
</dbReference>
<dbReference type="InterPro" id="IPR036291">
    <property type="entry name" value="NAD(P)-bd_dom_sf"/>
</dbReference>
<dbReference type="InterPro" id="IPR000672">
    <property type="entry name" value="THF_DH/CycHdrlase"/>
</dbReference>
<dbReference type="InterPro" id="IPR020630">
    <property type="entry name" value="THF_DH/CycHdrlase_cat_dom"/>
</dbReference>
<dbReference type="InterPro" id="IPR020867">
    <property type="entry name" value="THF_DH/CycHdrlase_CS"/>
</dbReference>
<dbReference type="InterPro" id="IPR020631">
    <property type="entry name" value="THF_DH/CycHdrlase_NAD-bd_dom"/>
</dbReference>
<dbReference type="PANTHER" id="PTHR48099:SF5">
    <property type="entry name" value="C-1-TETRAHYDROFOLATE SYNTHASE, CYTOPLASMIC"/>
    <property type="match status" value="1"/>
</dbReference>
<dbReference type="PANTHER" id="PTHR48099">
    <property type="entry name" value="C-1-TETRAHYDROFOLATE SYNTHASE, CYTOPLASMIC-RELATED"/>
    <property type="match status" value="1"/>
</dbReference>
<dbReference type="Pfam" id="PF00763">
    <property type="entry name" value="THF_DHG_CYH"/>
    <property type="match status" value="1"/>
</dbReference>
<dbReference type="Pfam" id="PF02882">
    <property type="entry name" value="THF_DHG_CYH_C"/>
    <property type="match status" value="1"/>
</dbReference>
<dbReference type="PRINTS" id="PR00085">
    <property type="entry name" value="THFDHDRGNASE"/>
</dbReference>
<dbReference type="SUPFAM" id="SSF53223">
    <property type="entry name" value="Aminoacid dehydrogenase-like, N-terminal domain"/>
    <property type="match status" value="1"/>
</dbReference>
<dbReference type="SUPFAM" id="SSF51735">
    <property type="entry name" value="NAD(P)-binding Rossmann-fold domains"/>
    <property type="match status" value="1"/>
</dbReference>
<dbReference type="PROSITE" id="PS00767">
    <property type="entry name" value="THF_DHG_CYH_2"/>
    <property type="match status" value="1"/>
</dbReference>
<organism>
    <name type="scientific">Hydrogenobaculum sp. (strain Y04AAS1)</name>
    <dbReference type="NCBI Taxonomy" id="380749"/>
    <lineage>
        <taxon>Bacteria</taxon>
        <taxon>Pseudomonadati</taxon>
        <taxon>Aquificota</taxon>
        <taxon>Aquificia</taxon>
        <taxon>Aquificales</taxon>
        <taxon>Aquificaceae</taxon>
        <taxon>Hydrogenobaculum</taxon>
    </lineage>
</organism>
<sequence length="278" mass="30439">MNILDGKSLAKKIKHNIKQEVKHLERKPKLVVVLVGDDQASLVYVKNKVQACADVGFSSQLDMFEKDVEEDVLLNHIKSLNEQEDVDGILVQLPLPSHISMQKVIDTIDPSKDVDGFHPQNMGKLFSGDLENAFIPCTPLGIKLLLDEYNIDLKGKNVCIVGAGFIVGKPLSMLMLNYDATVSVCHKYTKDIVEYTKTADILISATGVPFLIKDYMVKEGAVVIDVGISKVNGKIVGDVDFESISQKASFITPVPGGVGPMTVATLLLNTLKAYKQRI</sequence>
<reference key="1">
    <citation type="journal article" date="2009" name="J. Bacteriol.">
        <title>Complete and draft genome sequences of six members of the Aquificales.</title>
        <authorList>
            <person name="Reysenbach A.-L."/>
            <person name="Hamamura N."/>
            <person name="Podar M."/>
            <person name="Griffiths E."/>
            <person name="Ferreira S."/>
            <person name="Hochstein R."/>
            <person name="Heidelberg J."/>
            <person name="Johnson J."/>
            <person name="Mead D."/>
            <person name="Pohorille A."/>
            <person name="Sarmiento M."/>
            <person name="Schweighofer K."/>
            <person name="Seshadri R."/>
            <person name="Voytek M.A."/>
        </authorList>
    </citation>
    <scope>NUCLEOTIDE SEQUENCE [LARGE SCALE GENOMIC DNA]</scope>
    <source>
        <strain>Y04AAS1</strain>
    </source>
</reference>